<reference key="1">
    <citation type="journal article" date="2006" name="J. Bacteriol.">
        <title>Whole-genome sequence of Listeria welshimeri reveals common steps in genome reduction with Listeria innocua as compared to Listeria monocytogenes.</title>
        <authorList>
            <person name="Hain T."/>
            <person name="Steinweg C."/>
            <person name="Kuenne C.T."/>
            <person name="Billion A."/>
            <person name="Ghai R."/>
            <person name="Chatterjee S.S."/>
            <person name="Domann E."/>
            <person name="Kaerst U."/>
            <person name="Goesmann A."/>
            <person name="Bekel T."/>
            <person name="Bartels D."/>
            <person name="Kaiser O."/>
            <person name="Meyer F."/>
            <person name="Puehler A."/>
            <person name="Weisshaar B."/>
            <person name="Wehland J."/>
            <person name="Liang C."/>
            <person name="Dandekar T."/>
            <person name="Lampidis R."/>
            <person name="Kreft J."/>
            <person name="Goebel W."/>
            <person name="Chakraborty T."/>
        </authorList>
    </citation>
    <scope>NUCLEOTIDE SEQUENCE [LARGE SCALE GENOMIC DNA]</scope>
    <source>
        <strain>ATCC 35897 / DSM 20650 / CCUG 15529 / CIP 8149 / NCTC 11857 / SLCC 5334 / V8</strain>
    </source>
</reference>
<sequence>MSQDLQKEVASRKTFAIISHPDAGKTTITEQLLLFGGVIRSAGTVKGKKSGKFATSDWMEIEKQRGISVTSSVMQFDYNGSRINILDTPGHSDFSEDTYRTLMAVDSAVMVIDAAKGIEAQTLKLFKVCRMRGIPIFTFINKMDRQGKMPLELLAELEEVLEIESYPMNWPIGMGKELAGLYDRYHRVIEQYRSEEDERFLPLGEDGDLKEAHEIQKSLYYDQALEEIMLLDEAGNDFSRERILAGEQTPVFFGSALTNFGVETFLRTFVDFAPAPSSHESNEGIIEADNPKFSGFIFKIQANMNPAHRDRIAFIRICSGEFERGMNVTLTRTGKSIKLANSTQFMADDRETVNRAVAGDIIGLYDTGNYQIGDTITNGSKKLEFEKLPQFTPELFMRVYAKNVMKQKHFHKGVEQLVQEGAIQLFKTWRTEEYIIGAVGQLQFEVFEHRMRGEYNSEIRMEPIGKKIARWVKEEDADEKLSTARSMLVKDRFDQPLFLFENEFAINWFNDKNPDIELTSLL</sequence>
<gene>
    <name evidence="1" type="primary">prfC</name>
    <name type="ordered locus">lwe0971</name>
</gene>
<name>RF3_LISW6</name>
<accession>A0AHA7</accession>
<protein>
    <recommendedName>
        <fullName evidence="1">Peptide chain release factor 3</fullName>
        <shortName evidence="1">RF-3</shortName>
    </recommendedName>
</protein>
<dbReference type="EMBL" id="AM263198">
    <property type="protein sequence ID" value="CAK20389.1"/>
    <property type="molecule type" value="Genomic_DNA"/>
</dbReference>
<dbReference type="RefSeq" id="WP_011701800.1">
    <property type="nucleotide sequence ID" value="NC_008555.1"/>
</dbReference>
<dbReference type="SMR" id="A0AHA7"/>
<dbReference type="STRING" id="386043.lwe0971"/>
<dbReference type="GeneID" id="61188862"/>
<dbReference type="KEGG" id="lwe:lwe0971"/>
<dbReference type="eggNOG" id="COG4108">
    <property type="taxonomic scope" value="Bacteria"/>
</dbReference>
<dbReference type="HOGENOM" id="CLU_002794_2_1_9"/>
<dbReference type="OrthoDB" id="9804431at2"/>
<dbReference type="Proteomes" id="UP000000779">
    <property type="component" value="Chromosome"/>
</dbReference>
<dbReference type="GO" id="GO:0005829">
    <property type="term" value="C:cytosol"/>
    <property type="evidence" value="ECO:0007669"/>
    <property type="project" value="TreeGrafter"/>
</dbReference>
<dbReference type="GO" id="GO:0005525">
    <property type="term" value="F:GTP binding"/>
    <property type="evidence" value="ECO:0007669"/>
    <property type="project" value="UniProtKB-UniRule"/>
</dbReference>
<dbReference type="GO" id="GO:0003924">
    <property type="term" value="F:GTPase activity"/>
    <property type="evidence" value="ECO:0007669"/>
    <property type="project" value="InterPro"/>
</dbReference>
<dbReference type="GO" id="GO:0016150">
    <property type="term" value="F:translation release factor activity, codon nonspecific"/>
    <property type="evidence" value="ECO:0007669"/>
    <property type="project" value="TreeGrafter"/>
</dbReference>
<dbReference type="GO" id="GO:0016149">
    <property type="term" value="F:translation release factor activity, codon specific"/>
    <property type="evidence" value="ECO:0007669"/>
    <property type="project" value="UniProtKB-UniRule"/>
</dbReference>
<dbReference type="GO" id="GO:0006449">
    <property type="term" value="P:regulation of translational termination"/>
    <property type="evidence" value="ECO:0007669"/>
    <property type="project" value="UniProtKB-UniRule"/>
</dbReference>
<dbReference type="CDD" id="cd04169">
    <property type="entry name" value="RF3"/>
    <property type="match status" value="1"/>
</dbReference>
<dbReference type="CDD" id="cd03689">
    <property type="entry name" value="RF3_II"/>
    <property type="match status" value="1"/>
</dbReference>
<dbReference type="CDD" id="cd16259">
    <property type="entry name" value="RF3_III"/>
    <property type="match status" value="1"/>
</dbReference>
<dbReference type="FunFam" id="2.40.30.10:FF:000040">
    <property type="entry name" value="Peptide chain release factor 3"/>
    <property type="match status" value="1"/>
</dbReference>
<dbReference type="FunFam" id="3.30.70.3280:FF:000001">
    <property type="entry name" value="Peptide chain release factor 3"/>
    <property type="match status" value="1"/>
</dbReference>
<dbReference type="FunFam" id="3.40.50.300:FF:000542">
    <property type="entry name" value="Peptide chain release factor 3"/>
    <property type="match status" value="1"/>
</dbReference>
<dbReference type="Gene3D" id="3.40.50.300">
    <property type="entry name" value="P-loop containing nucleotide triphosphate hydrolases"/>
    <property type="match status" value="1"/>
</dbReference>
<dbReference type="Gene3D" id="3.30.70.3280">
    <property type="entry name" value="Peptide chain release factor 3, domain III"/>
    <property type="match status" value="1"/>
</dbReference>
<dbReference type="Gene3D" id="2.40.30.10">
    <property type="entry name" value="Translation factors"/>
    <property type="match status" value="1"/>
</dbReference>
<dbReference type="HAMAP" id="MF_00072">
    <property type="entry name" value="Rel_fac_3"/>
    <property type="match status" value="1"/>
</dbReference>
<dbReference type="InterPro" id="IPR053905">
    <property type="entry name" value="EF-G-like_DII"/>
</dbReference>
<dbReference type="InterPro" id="IPR035647">
    <property type="entry name" value="EFG_III/V"/>
</dbReference>
<dbReference type="InterPro" id="IPR031157">
    <property type="entry name" value="G_TR_CS"/>
</dbReference>
<dbReference type="InterPro" id="IPR027417">
    <property type="entry name" value="P-loop_NTPase"/>
</dbReference>
<dbReference type="InterPro" id="IPR004548">
    <property type="entry name" value="PrfC"/>
</dbReference>
<dbReference type="InterPro" id="IPR032090">
    <property type="entry name" value="RF3_C"/>
</dbReference>
<dbReference type="InterPro" id="IPR038467">
    <property type="entry name" value="RF3_dom_3_sf"/>
</dbReference>
<dbReference type="InterPro" id="IPR041732">
    <property type="entry name" value="RF3_GTP-bd"/>
</dbReference>
<dbReference type="InterPro" id="IPR005225">
    <property type="entry name" value="Small_GTP-bd"/>
</dbReference>
<dbReference type="InterPro" id="IPR000795">
    <property type="entry name" value="T_Tr_GTP-bd_dom"/>
</dbReference>
<dbReference type="InterPro" id="IPR009000">
    <property type="entry name" value="Transl_B-barrel_sf"/>
</dbReference>
<dbReference type="NCBIfam" id="TIGR00503">
    <property type="entry name" value="prfC"/>
    <property type="match status" value="1"/>
</dbReference>
<dbReference type="NCBIfam" id="NF001964">
    <property type="entry name" value="PRK00741.1"/>
    <property type="match status" value="1"/>
</dbReference>
<dbReference type="NCBIfam" id="TIGR00231">
    <property type="entry name" value="small_GTP"/>
    <property type="match status" value="1"/>
</dbReference>
<dbReference type="PANTHER" id="PTHR43556">
    <property type="entry name" value="PEPTIDE CHAIN RELEASE FACTOR RF3"/>
    <property type="match status" value="1"/>
</dbReference>
<dbReference type="PANTHER" id="PTHR43556:SF2">
    <property type="entry name" value="PEPTIDE CHAIN RELEASE FACTOR RF3"/>
    <property type="match status" value="1"/>
</dbReference>
<dbReference type="Pfam" id="PF22042">
    <property type="entry name" value="EF-G_D2"/>
    <property type="match status" value="1"/>
</dbReference>
<dbReference type="Pfam" id="PF00009">
    <property type="entry name" value="GTP_EFTU"/>
    <property type="match status" value="1"/>
</dbReference>
<dbReference type="Pfam" id="PF16658">
    <property type="entry name" value="RF3_C"/>
    <property type="match status" value="1"/>
</dbReference>
<dbReference type="PRINTS" id="PR00315">
    <property type="entry name" value="ELONGATNFCT"/>
</dbReference>
<dbReference type="SUPFAM" id="SSF54980">
    <property type="entry name" value="EF-G C-terminal domain-like"/>
    <property type="match status" value="1"/>
</dbReference>
<dbReference type="SUPFAM" id="SSF52540">
    <property type="entry name" value="P-loop containing nucleoside triphosphate hydrolases"/>
    <property type="match status" value="1"/>
</dbReference>
<dbReference type="SUPFAM" id="SSF50447">
    <property type="entry name" value="Translation proteins"/>
    <property type="match status" value="1"/>
</dbReference>
<dbReference type="PROSITE" id="PS00301">
    <property type="entry name" value="G_TR_1"/>
    <property type="match status" value="1"/>
</dbReference>
<dbReference type="PROSITE" id="PS51722">
    <property type="entry name" value="G_TR_2"/>
    <property type="match status" value="1"/>
</dbReference>
<proteinExistence type="inferred from homology"/>
<organism>
    <name type="scientific">Listeria welshimeri serovar 6b (strain ATCC 35897 / DSM 20650 / CCUG 15529 / CIP 8149 / NCTC 11857 / SLCC 5334 / V8)</name>
    <dbReference type="NCBI Taxonomy" id="386043"/>
    <lineage>
        <taxon>Bacteria</taxon>
        <taxon>Bacillati</taxon>
        <taxon>Bacillota</taxon>
        <taxon>Bacilli</taxon>
        <taxon>Bacillales</taxon>
        <taxon>Listeriaceae</taxon>
        <taxon>Listeria</taxon>
    </lineage>
</organism>
<evidence type="ECO:0000255" key="1">
    <source>
        <dbReference type="HAMAP-Rule" id="MF_00072"/>
    </source>
</evidence>
<feature type="chain" id="PRO_1000023660" description="Peptide chain release factor 3">
    <location>
        <begin position="1"/>
        <end position="522"/>
    </location>
</feature>
<feature type="domain" description="tr-type G">
    <location>
        <begin position="10"/>
        <end position="277"/>
    </location>
</feature>
<feature type="binding site" evidence="1">
    <location>
        <begin position="19"/>
        <end position="26"/>
    </location>
    <ligand>
        <name>GTP</name>
        <dbReference type="ChEBI" id="CHEBI:37565"/>
    </ligand>
</feature>
<feature type="binding site" evidence="1">
    <location>
        <begin position="87"/>
        <end position="91"/>
    </location>
    <ligand>
        <name>GTP</name>
        <dbReference type="ChEBI" id="CHEBI:37565"/>
    </ligand>
</feature>
<feature type="binding site" evidence="1">
    <location>
        <begin position="141"/>
        <end position="144"/>
    </location>
    <ligand>
        <name>GTP</name>
        <dbReference type="ChEBI" id="CHEBI:37565"/>
    </ligand>
</feature>
<keyword id="KW-0963">Cytoplasm</keyword>
<keyword id="KW-0342">GTP-binding</keyword>
<keyword id="KW-0547">Nucleotide-binding</keyword>
<keyword id="KW-0648">Protein biosynthesis</keyword>
<comment type="function">
    <text evidence="1">Increases the formation of ribosomal termination complexes and stimulates activities of RF-1 and RF-2. It binds guanine nucleotides and has strong preference for UGA stop codons. It may interact directly with the ribosome. The stimulation of RF-1 and RF-2 is significantly reduced by GTP and GDP, but not by GMP.</text>
</comment>
<comment type="subcellular location">
    <subcellularLocation>
        <location evidence="1">Cytoplasm</location>
    </subcellularLocation>
</comment>
<comment type="similarity">
    <text evidence="1">Belongs to the TRAFAC class translation factor GTPase superfamily. Classic translation factor GTPase family. PrfC subfamily.</text>
</comment>